<keyword id="KW-0963">Cytoplasm</keyword>
<keyword id="KW-0227">DNA damage</keyword>
<keyword id="KW-0228">DNA excision</keyword>
<keyword id="KW-0234">DNA repair</keyword>
<keyword id="KW-0267">Excision nuclease</keyword>
<keyword id="KW-1185">Reference proteome</keyword>
<keyword id="KW-0742">SOS response</keyword>
<protein>
    <recommendedName>
        <fullName evidence="1">UvrABC system protein C</fullName>
        <shortName evidence="1">Protein UvrC</shortName>
    </recommendedName>
    <alternativeName>
        <fullName evidence="1">Excinuclease ABC subunit C</fullName>
    </alternativeName>
</protein>
<feature type="chain" id="PRO_1000099469" description="UvrABC system protein C">
    <location>
        <begin position="1"/>
        <end position="618"/>
    </location>
</feature>
<feature type="domain" description="GIY-YIG" evidence="1">
    <location>
        <begin position="13"/>
        <end position="92"/>
    </location>
</feature>
<feature type="domain" description="UVR" evidence="1">
    <location>
        <begin position="204"/>
        <end position="239"/>
    </location>
</feature>
<organism>
    <name type="scientific">Clostridium botulinum (strain Hall / ATCC 3502 / NCTC 13319 / Type A)</name>
    <dbReference type="NCBI Taxonomy" id="441771"/>
    <lineage>
        <taxon>Bacteria</taxon>
        <taxon>Bacillati</taxon>
        <taxon>Bacillota</taxon>
        <taxon>Clostridia</taxon>
        <taxon>Eubacteriales</taxon>
        <taxon>Clostridiaceae</taxon>
        <taxon>Clostridium</taxon>
    </lineage>
</organism>
<reference key="1">
    <citation type="journal article" date="2007" name="Genome Res.">
        <title>Genome sequence of a proteolytic (Group I) Clostridium botulinum strain Hall A and comparative analysis of the clostridial genomes.</title>
        <authorList>
            <person name="Sebaihia M."/>
            <person name="Peck M.W."/>
            <person name="Minton N.P."/>
            <person name="Thomson N.R."/>
            <person name="Holden M.T.G."/>
            <person name="Mitchell W.J."/>
            <person name="Carter A.T."/>
            <person name="Bentley S.D."/>
            <person name="Mason D.R."/>
            <person name="Crossman L."/>
            <person name="Paul C.J."/>
            <person name="Ivens A."/>
            <person name="Wells-Bennik M.H.J."/>
            <person name="Davis I.J."/>
            <person name="Cerdeno-Tarraga A.M."/>
            <person name="Churcher C."/>
            <person name="Quail M.A."/>
            <person name="Chillingworth T."/>
            <person name="Feltwell T."/>
            <person name="Fraser A."/>
            <person name="Goodhead I."/>
            <person name="Hance Z."/>
            <person name="Jagels K."/>
            <person name="Larke N."/>
            <person name="Maddison M."/>
            <person name="Moule S."/>
            <person name="Mungall K."/>
            <person name="Norbertczak H."/>
            <person name="Rabbinowitsch E."/>
            <person name="Sanders M."/>
            <person name="Simmonds M."/>
            <person name="White B."/>
            <person name="Whithead S."/>
            <person name="Parkhill J."/>
        </authorList>
    </citation>
    <scope>NUCLEOTIDE SEQUENCE [LARGE SCALE GENOMIC DNA]</scope>
    <source>
        <strain>Hall / ATCC 3502 / NCTC 13319 / Type A</strain>
    </source>
</reference>
<reference key="2">
    <citation type="journal article" date="2007" name="PLoS ONE">
        <title>Analysis of the neurotoxin complex genes in Clostridium botulinum A1-A4 and B1 strains: BoNT/A3, /Ba4 and /B1 clusters are located within plasmids.</title>
        <authorList>
            <person name="Smith T.J."/>
            <person name="Hill K.K."/>
            <person name="Foley B.T."/>
            <person name="Detter J.C."/>
            <person name="Munk A.C."/>
            <person name="Bruce D.C."/>
            <person name="Doggett N.A."/>
            <person name="Smith L.A."/>
            <person name="Marks J.D."/>
            <person name="Xie G."/>
            <person name="Brettin T.S."/>
        </authorList>
    </citation>
    <scope>NUCLEOTIDE SEQUENCE [LARGE SCALE GENOMIC DNA]</scope>
    <source>
        <strain>Hall / ATCC 3502 / NCTC 13319 / Type A</strain>
    </source>
</reference>
<evidence type="ECO:0000255" key="1">
    <source>
        <dbReference type="HAMAP-Rule" id="MF_00203"/>
    </source>
</evidence>
<comment type="function">
    <text evidence="1">The UvrABC repair system catalyzes the recognition and processing of DNA lesions. UvrC both incises the 5' and 3' sides of the lesion. The N-terminal half is responsible for the 3' incision and the C-terminal half is responsible for the 5' incision.</text>
</comment>
<comment type="subunit">
    <text evidence="1">Interacts with UvrB in an incision complex.</text>
</comment>
<comment type="subcellular location">
    <subcellularLocation>
        <location evidence="1">Cytoplasm</location>
    </subcellularLocation>
</comment>
<comment type="similarity">
    <text evidence="1">Belongs to the UvrC family.</text>
</comment>
<dbReference type="EMBL" id="CP000727">
    <property type="protein sequence ID" value="ABS37682.1"/>
    <property type="molecule type" value="Genomic_DNA"/>
</dbReference>
<dbReference type="EMBL" id="AM412317">
    <property type="protein sequence ID" value="CAL84939.1"/>
    <property type="molecule type" value="Genomic_DNA"/>
</dbReference>
<dbReference type="RefSeq" id="WP_012048309.1">
    <property type="nucleotide sequence ID" value="NC_009698.1"/>
</dbReference>
<dbReference type="RefSeq" id="YP_001255862.1">
    <property type="nucleotide sequence ID" value="NC_009495.1"/>
</dbReference>
<dbReference type="RefSeq" id="YP_001389103.1">
    <property type="nucleotide sequence ID" value="NC_009698.1"/>
</dbReference>
<dbReference type="SMR" id="A5I7A5"/>
<dbReference type="GeneID" id="5186190"/>
<dbReference type="KEGG" id="cbh:CLC_3323"/>
<dbReference type="KEGG" id="cbo:CBO3380"/>
<dbReference type="PATRIC" id="fig|413999.7.peg.3354"/>
<dbReference type="HOGENOM" id="CLU_014841_3_2_9"/>
<dbReference type="PRO" id="PR:A5I7A5"/>
<dbReference type="Proteomes" id="UP000001986">
    <property type="component" value="Chromosome"/>
</dbReference>
<dbReference type="GO" id="GO:0005737">
    <property type="term" value="C:cytoplasm"/>
    <property type="evidence" value="ECO:0007669"/>
    <property type="project" value="UniProtKB-SubCell"/>
</dbReference>
<dbReference type="GO" id="GO:0009380">
    <property type="term" value="C:excinuclease repair complex"/>
    <property type="evidence" value="ECO:0000318"/>
    <property type="project" value="GO_Central"/>
</dbReference>
<dbReference type="GO" id="GO:0003677">
    <property type="term" value="F:DNA binding"/>
    <property type="evidence" value="ECO:0007669"/>
    <property type="project" value="UniProtKB-UniRule"/>
</dbReference>
<dbReference type="GO" id="GO:0009381">
    <property type="term" value="F:excinuclease ABC activity"/>
    <property type="evidence" value="ECO:0007669"/>
    <property type="project" value="UniProtKB-UniRule"/>
</dbReference>
<dbReference type="GO" id="GO:0006974">
    <property type="term" value="P:DNA damage response"/>
    <property type="evidence" value="ECO:0000318"/>
    <property type="project" value="GO_Central"/>
</dbReference>
<dbReference type="GO" id="GO:0006289">
    <property type="term" value="P:nucleotide-excision repair"/>
    <property type="evidence" value="ECO:0007669"/>
    <property type="project" value="UniProtKB-UniRule"/>
</dbReference>
<dbReference type="GO" id="GO:0009432">
    <property type="term" value="P:SOS response"/>
    <property type="evidence" value="ECO:0007669"/>
    <property type="project" value="UniProtKB-UniRule"/>
</dbReference>
<dbReference type="CDD" id="cd10434">
    <property type="entry name" value="GIY-YIG_UvrC_Cho"/>
    <property type="match status" value="1"/>
</dbReference>
<dbReference type="FunFam" id="3.40.1440.10:FF:000001">
    <property type="entry name" value="UvrABC system protein C"/>
    <property type="match status" value="1"/>
</dbReference>
<dbReference type="Gene3D" id="1.10.150.20">
    <property type="entry name" value="5' to 3' exonuclease, C-terminal subdomain"/>
    <property type="match status" value="1"/>
</dbReference>
<dbReference type="Gene3D" id="3.40.1440.10">
    <property type="entry name" value="GIY-YIG endonuclease"/>
    <property type="match status" value="1"/>
</dbReference>
<dbReference type="Gene3D" id="4.10.860.10">
    <property type="entry name" value="UVR domain"/>
    <property type="match status" value="1"/>
</dbReference>
<dbReference type="Gene3D" id="3.30.420.340">
    <property type="entry name" value="UvrC, RNAse H endonuclease domain"/>
    <property type="match status" value="1"/>
</dbReference>
<dbReference type="HAMAP" id="MF_00203">
    <property type="entry name" value="UvrC"/>
    <property type="match status" value="1"/>
</dbReference>
<dbReference type="InterPro" id="IPR041663">
    <property type="entry name" value="DisA/LigA_HHH"/>
</dbReference>
<dbReference type="InterPro" id="IPR000305">
    <property type="entry name" value="GIY-YIG_endonuc"/>
</dbReference>
<dbReference type="InterPro" id="IPR035901">
    <property type="entry name" value="GIY-YIG_endonuc_sf"/>
</dbReference>
<dbReference type="InterPro" id="IPR047296">
    <property type="entry name" value="GIY-YIG_UvrC_Cho"/>
</dbReference>
<dbReference type="InterPro" id="IPR010994">
    <property type="entry name" value="RuvA_2-like"/>
</dbReference>
<dbReference type="InterPro" id="IPR001943">
    <property type="entry name" value="UVR_dom"/>
</dbReference>
<dbReference type="InterPro" id="IPR036876">
    <property type="entry name" value="UVR_dom_sf"/>
</dbReference>
<dbReference type="InterPro" id="IPR050066">
    <property type="entry name" value="UvrABC_protein_C"/>
</dbReference>
<dbReference type="InterPro" id="IPR004791">
    <property type="entry name" value="UvrC"/>
</dbReference>
<dbReference type="InterPro" id="IPR001162">
    <property type="entry name" value="UvrC_RNase_H_dom"/>
</dbReference>
<dbReference type="InterPro" id="IPR038476">
    <property type="entry name" value="UvrC_RNase_H_dom_sf"/>
</dbReference>
<dbReference type="NCBIfam" id="NF001824">
    <property type="entry name" value="PRK00558.1-5"/>
    <property type="match status" value="1"/>
</dbReference>
<dbReference type="NCBIfam" id="TIGR00194">
    <property type="entry name" value="uvrC"/>
    <property type="match status" value="1"/>
</dbReference>
<dbReference type="PANTHER" id="PTHR30562:SF1">
    <property type="entry name" value="UVRABC SYSTEM PROTEIN C"/>
    <property type="match status" value="1"/>
</dbReference>
<dbReference type="PANTHER" id="PTHR30562">
    <property type="entry name" value="UVRC/OXIDOREDUCTASE"/>
    <property type="match status" value="1"/>
</dbReference>
<dbReference type="Pfam" id="PF01541">
    <property type="entry name" value="GIY-YIG"/>
    <property type="match status" value="1"/>
</dbReference>
<dbReference type="Pfam" id="PF12826">
    <property type="entry name" value="HHH_2"/>
    <property type="match status" value="1"/>
</dbReference>
<dbReference type="Pfam" id="PF02151">
    <property type="entry name" value="UVR"/>
    <property type="match status" value="1"/>
</dbReference>
<dbReference type="Pfam" id="PF22920">
    <property type="entry name" value="UvrC_RNaseH"/>
    <property type="match status" value="1"/>
</dbReference>
<dbReference type="Pfam" id="PF08459">
    <property type="entry name" value="UvrC_RNaseH_dom"/>
    <property type="match status" value="1"/>
</dbReference>
<dbReference type="SMART" id="SM00465">
    <property type="entry name" value="GIYc"/>
    <property type="match status" value="1"/>
</dbReference>
<dbReference type="SUPFAM" id="SSF46600">
    <property type="entry name" value="C-terminal UvrC-binding domain of UvrB"/>
    <property type="match status" value="1"/>
</dbReference>
<dbReference type="SUPFAM" id="SSF82771">
    <property type="entry name" value="GIY-YIG endonuclease"/>
    <property type="match status" value="1"/>
</dbReference>
<dbReference type="SUPFAM" id="SSF47781">
    <property type="entry name" value="RuvA domain 2-like"/>
    <property type="match status" value="1"/>
</dbReference>
<dbReference type="PROSITE" id="PS50164">
    <property type="entry name" value="GIY_YIG"/>
    <property type="match status" value="1"/>
</dbReference>
<dbReference type="PROSITE" id="PS50151">
    <property type="entry name" value="UVR"/>
    <property type="match status" value="1"/>
</dbReference>
<dbReference type="PROSITE" id="PS50165">
    <property type="entry name" value="UVRC"/>
    <property type="match status" value="1"/>
</dbReference>
<accession>A5I7A5</accession>
<accession>A7G8I8</accession>
<sequence>MFDLEYQLKNLPDKPGVYLMKNNLGEIIYVGKAKILKNRVRQYFQKSQKHSEKVKAMVKNIEEFEYIITDSEIEALILECNLIKKYRPKYNILLKDDKHYPFIKVTLAEDFPRVISTRKVTKDGSKYFGPYVDGSSVKDIIELIKKTFPIRTCKKNIVEEAKAIRPCLNYQIGLCKAPCAQYIKKSEYRETIDDVIKLLSGKHLDIVENFKLNMEKAAENLEFEKAAMLRDKINIIEKIGEKQKIILNNFDNEDYISLYSDGKDTCFQVFFLRNGKIVGREHFIIEDTFDTNSSTLISNFLKEFYGGTAYIPKTIYVPNIEDEALLEQWLTLKKESKSTIKIPIKGEKKNILVLVEKNAKTTLENFKLKYLQEKALYDNVLKDLKNILRLQEEPIRIEAFDISNIQGFDSVGSMVVFEKGRAKPSDYRRFKINTVKGADDYKSMKEILTRRFQHGLSEIKSIQDRKLEFSSGKFSVFPDLILMDGGKGQINIALEVLNAFNIDIPVCGMVKDNKHRTRGLIYNGEEIIINKYGSVMKFITRVQDEVHRFAISYHRSLRGKNSFHSLLDDIPNIGEKRKKDLLFNFKSIDNIKKATYEELLSIPSMDKKSAECVLEFFK</sequence>
<gene>
    <name evidence="1" type="primary">uvrC</name>
    <name type="ordered locus">CBO3380</name>
    <name type="ordered locus">CLC_3323</name>
</gene>
<name>UVRC_CLOBH</name>
<proteinExistence type="inferred from homology"/>